<evidence type="ECO:0000255" key="1">
    <source>
        <dbReference type="HAMAP-Rule" id="MF_00446"/>
    </source>
</evidence>
<comment type="function">
    <text evidence="1">Catalyzes the pyruvoyl-dependent decarboxylation of aspartate to produce beta-alanine.</text>
</comment>
<comment type="catalytic activity">
    <reaction evidence="1">
        <text>L-aspartate + H(+) = beta-alanine + CO2</text>
        <dbReference type="Rhea" id="RHEA:19497"/>
        <dbReference type="ChEBI" id="CHEBI:15378"/>
        <dbReference type="ChEBI" id="CHEBI:16526"/>
        <dbReference type="ChEBI" id="CHEBI:29991"/>
        <dbReference type="ChEBI" id="CHEBI:57966"/>
        <dbReference type="EC" id="4.1.1.11"/>
    </reaction>
</comment>
<comment type="cofactor">
    <cofactor evidence="1">
        <name>pyruvate</name>
        <dbReference type="ChEBI" id="CHEBI:15361"/>
    </cofactor>
    <text evidence="1">Binds 1 pyruvoyl group covalently per subunit.</text>
</comment>
<comment type="pathway">
    <text evidence="1">Cofactor biosynthesis; (R)-pantothenate biosynthesis; beta-alanine from L-aspartate: step 1/1.</text>
</comment>
<comment type="subunit">
    <text evidence="1">Heterooctamer of four alpha and four beta subunits.</text>
</comment>
<comment type="subcellular location">
    <subcellularLocation>
        <location evidence="1">Cytoplasm</location>
    </subcellularLocation>
</comment>
<comment type="PTM">
    <text evidence="1">Is synthesized initially as an inactive proenzyme, which is activated by self-cleavage at a specific serine bond to produce a beta-subunit with a hydroxyl group at its C-terminus and an alpha-subunit with a pyruvoyl group at its N-terminus.</text>
</comment>
<comment type="similarity">
    <text evidence="1">Belongs to the PanD family.</text>
</comment>
<sequence length="126" mass="13713">MLSRLLKCKIHRAVVTHAELHYEGSCAIDGVLMDLAGIREYEEIHVWNVTNGKRFTTYAIRGEDNSGIISVNGGAAHQADVGDLVIIATFGDFTEAEANAHKPRLVYANPDNTVNHTANCIPVQVA</sequence>
<accession>B2HUM1</accession>
<protein>
    <recommendedName>
        <fullName evidence="1">Aspartate 1-decarboxylase</fullName>
        <ecNumber evidence="1">4.1.1.11</ecNumber>
    </recommendedName>
    <alternativeName>
        <fullName evidence="1">Aspartate alpha-decarboxylase</fullName>
    </alternativeName>
    <component>
        <recommendedName>
            <fullName evidence="1">Aspartate 1-decarboxylase beta chain</fullName>
        </recommendedName>
    </component>
    <component>
        <recommendedName>
            <fullName evidence="1">Aspartate 1-decarboxylase alpha chain</fullName>
        </recommendedName>
    </component>
</protein>
<reference key="1">
    <citation type="journal article" date="2008" name="Antimicrob. Agents Chemother.">
        <title>Whole-genome pyrosequencing of an epidemic multidrug-resistant Acinetobacter baumannii strain belonging to the European clone II group.</title>
        <authorList>
            <person name="Iacono M."/>
            <person name="Villa L."/>
            <person name="Fortini D."/>
            <person name="Bordoni R."/>
            <person name="Imperi F."/>
            <person name="Bonnal R.J."/>
            <person name="Sicheritz-Ponten T."/>
            <person name="De Bellis G."/>
            <person name="Visca P."/>
            <person name="Cassone A."/>
            <person name="Carattoli A."/>
        </authorList>
    </citation>
    <scope>NUCLEOTIDE SEQUENCE [LARGE SCALE GENOMIC DNA]</scope>
    <source>
        <strain>ACICU</strain>
    </source>
</reference>
<dbReference type="EC" id="4.1.1.11" evidence="1"/>
<dbReference type="EMBL" id="CP000863">
    <property type="protein sequence ID" value="ACC56096.1"/>
    <property type="molecule type" value="Genomic_DNA"/>
</dbReference>
<dbReference type="RefSeq" id="WP_000952664.1">
    <property type="nucleotide sequence ID" value="NZ_CP031380.1"/>
</dbReference>
<dbReference type="SMR" id="B2HUM1"/>
<dbReference type="GeneID" id="92892757"/>
<dbReference type="KEGG" id="abc:ACICU_00784"/>
<dbReference type="HOGENOM" id="CLU_115305_2_1_6"/>
<dbReference type="UniPathway" id="UPA00028">
    <property type="reaction ID" value="UER00002"/>
</dbReference>
<dbReference type="Proteomes" id="UP000008839">
    <property type="component" value="Chromosome"/>
</dbReference>
<dbReference type="GO" id="GO:0005829">
    <property type="term" value="C:cytosol"/>
    <property type="evidence" value="ECO:0007669"/>
    <property type="project" value="TreeGrafter"/>
</dbReference>
<dbReference type="GO" id="GO:0004068">
    <property type="term" value="F:aspartate 1-decarboxylase activity"/>
    <property type="evidence" value="ECO:0007669"/>
    <property type="project" value="UniProtKB-UniRule"/>
</dbReference>
<dbReference type="GO" id="GO:0006523">
    <property type="term" value="P:alanine biosynthetic process"/>
    <property type="evidence" value="ECO:0007669"/>
    <property type="project" value="InterPro"/>
</dbReference>
<dbReference type="GO" id="GO:0015940">
    <property type="term" value="P:pantothenate biosynthetic process"/>
    <property type="evidence" value="ECO:0007669"/>
    <property type="project" value="UniProtKB-UniRule"/>
</dbReference>
<dbReference type="CDD" id="cd06919">
    <property type="entry name" value="Asp_decarbox"/>
    <property type="match status" value="1"/>
</dbReference>
<dbReference type="Gene3D" id="2.40.40.20">
    <property type="match status" value="1"/>
</dbReference>
<dbReference type="HAMAP" id="MF_00446">
    <property type="entry name" value="PanD"/>
    <property type="match status" value="1"/>
</dbReference>
<dbReference type="InterPro" id="IPR009010">
    <property type="entry name" value="Asp_de-COase-like_dom_sf"/>
</dbReference>
<dbReference type="InterPro" id="IPR003190">
    <property type="entry name" value="Asp_decarbox"/>
</dbReference>
<dbReference type="NCBIfam" id="TIGR00223">
    <property type="entry name" value="panD"/>
    <property type="match status" value="1"/>
</dbReference>
<dbReference type="PANTHER" id="PTHR21012">
    <property type="entry name" value="ASPARTATE 1-DECARBOXYLASE"/>
    <property type="match status" value="1"/>
</dbReference>
<dbReference type="PANTHER" id="PTHR21012:SF0">
    <property type="entry name" value="ASPARTATE 1-DECARBOXYLASE"/>
    <property type="match status" value="1"/>
</dbReference>
<dbReference type="Pfam" id="PF02261">
    <property type="entry name" value="Asp_decarbox"/>
    <property type="match status" value="1"/>
</dbReference>
<dbReference type="PIRSF" id="PIRSF006246">
    <property type="entry name" value="Asp_decarbox"/>
    <property type="match status" value="1"/>
</dbReference>
<dbReference type="SUPFAM" id="SSF50692">
    <property type="entry name" value="ADC-like"/>
    <property type="match status" value="1"/>
</dbReference>
<proteinExistence type="inferred from homology"/>
<feature type="chain" id="PRO_1000124737" description="Aspartate 1-decarboxylase beta chain" evidence="1">
    <location>
        <begin position="1"/>
        <end position="24"/>
    </location>
</feature>
<feature type="chain" id="PRO_1000124738" description="Aspartate 1-decarboxylase alpha chain" evidence="1">
    <location>
        <begin position="25"/>
        <end position="126"/>
    </location>
</feature>
<feature type="active site" description="Schiff-base intermediate with substrate; via pyruvic acid" evidence="1">
    <location>
        <position position="25"/>
    </location>
</feature>
<feature type="active site" description="Proton donor" evidence="1">
    <location>
        <position position="58"/>
    </location>
</feature>
<feature type="binding site" evidence="1">
    <location>
        <position position="57"/>
    </location>
    <ligand>
        <name>substrate</name>
    </ligand>
</feature>
<feature type="binding site" evidence="1">
    <location>
        <begin position="73"/>
        <end position="75"/>
    </location>
    <ligand>
        <name>substrate</name>
    </ligand>
</feature>
<feature type="modified residue" description="Pyruvic acid (Ser)" evidence="1">
    <location>
        <position position="25"/>
    </location>
</feature>
<keyword id="KW-0068">Autocatalytic cleavage</keyword>
<keyword id="KW-0963">Cytoplasm</keyword>
<keyword id="KW-0210">Decarboxylase</keyword>
<keyword id="KW-0456">Lyase</keyword>
<keyword id="KW-0566">Pantothenate biosynthesis</keyword>
<keyword id="KW-0670">Pyruvate</keyword>
<keyword id="KW-0704">Schiff base</keyword>
<keyword id="KW-0865">Zymogen</keyword>
<organism>
    <name type="scientific">Acinetobacter baumannii (strain ACICU)</name>
    <dbReference type="NCBI Taxonomy" id="405416"/>
    <lineage>
        <taxon>Bacteria</taxon>
        <taxon>Pseudomonadati</taxon>
        <taxon>Pseudomonadota</taxon>
        <taxon>Gammaproteobacteria</taxon>
        <taxon>Moraxellales</taxon>
        <taxon>Moraxellaceae</taxon>
        <taxon>Acinetobacter</taxon>
        <taxon>Acinetobacter calcoaceticus/baumannii complex</taxon>
    </lineage>
</organism>
<gene>
    <name evidence="1" type="primary">panD</name>
    <name type="ordered locus">ACICU_00784</name>
</gene>
<name>PAND_ACIBC</name>